<name>ISCX_ECOL6</name>
<proteinExistence type="inferred from homology"/>
<sequence>MGLKWTDSREIGEALYDAYPDIDPKTVRFTDMHQWICALEDFDDDPQASNEKILEAILLVWLDEAE</sequence>
<comment type="function">
    <text evidence="1">May function as iron donor in the assembly of iron-sulfur clusters.</text>
</comment>
<comment type="subunit">
    <text evidence="1">Monomer.</text>
</comment>
<comment type="similarity">
    <text evidence="2">Belongs to the IscX family.</text>
</comment>
<accession>Q8FF46</accession>
<gene>
    <name type="primary">iscX</name>
    <name type="ordered locus">c3049</name>
</gene>
<feature type="chain" id="PRO_0000211855" description="Protein IscX">
    <location>
        <begin position="1"/>
        <end position="66"/>
    </location>
</feature>
<dbReference type="EMBL" id="AE014075">
    <property type="protein sequence ID" value="AAN81499.1"/>
    <property type="molecule type" value="Genomic_DNA"/>
</dbReference>
<dbReference type="RefSeq" id="WP_000523612.1">
    <property type="nucleotide sequence ID" value="NZ_CP051263.1"/>
</dbReference>
<dbReference type="BMRB" id="Q8FF46"/>
<dbReference type="SMR" id="Q8FF46"/>
<dbReference type="STRING" id="199310.c3049"/>
<dbReference type="KEGG" id="ecc:c3049"/>
<dbReference type="eggNOG" id="COG2975">
    <property type="taxonomic scope" value="Bacteria"/>
</dbReference>
<dbReference type="HOGENOM" id="CLU_168040_1_0_6"/>
<dbReference type="BioCyc" id="ECOL199310:C3049-MONOMER"/>
<dbReference type="Proteomes" id="UP000001410">
    <property type="component" value="Chromosome"/>
</dbReference>
<dbReference type="GO" id="GO:0005829">
    <property type="term" value="C:cytosol"/>
    <property type="evidence" value="ECO:0007669"/>
    <property type="project" value="TreeGrafter"/>
</dbReference>
<dbReference type="GO" id="GO:0008198">
    <property type="term" value="F:ferrous iron binding"/>
    <property type="evidence" value="ECO:0007669"/>
    <property type="project" value="TreeGrafter"/>
</dbReference>
<dbReference type="GO" id="GO:0016226">
    <property type="term" value="P:iron-sulfur cluster assembly"/>
    <property type="evidence" value="ECO:0007669"/>
    <property type="project" value="InterPro"/>
</dbReference>
<dbReference type="FunFam" id="1.10.10.600:FF:000001">
    <property type="entry name" value="Fe-S assembly protein IscX"/>
    <property type="match status" value="1"/>
</dbReference>
<dbReference type="Gene3D" id="1.10.10.600">
    <property type="entry name" value="IscX-like"/>
    <property type="match status" value="1"/>
</dbReference>
<dbReference type="InterPro" id="IPR007479">
    <property type="entry name" value="ISC_FeS_clus_asmbl_IscsX"/>
</dbReference>
<dbReference type="InterPro" id="IPR036762">
    <property type="entry name" value="IscX-like_sf"/>
</dbReference>
<dbReference type="NCBIfam" id="TIGR03412">
    <property type="entry name" value="iscX_yfhJ"/>
    <property type="match status" value="1"/>
</dbReference>
<dbReference type="PANTHER" id="PTHR37532">
    <property type="entry name" value="PROTEIN ISCX"/>
    <property type="match status" value="1"/>
</dbReference>
<dbReference type="PANTHER" id="PTHR37532:SF1">
    <property type="entry name" value="PROTEIN ISCX"/>
    <property type="match status" value="1"/>
</dbReference>
<dbReference type="Pfam" id="PF04384">
    <property type="entry name" value="Fe-S_assembly"/>
    <property type="match status" value="1"/>
</dbReference>
<dbReference type="PIRSF" id="PIRSF039003">
    <property type="entry name" value="IscX"/>
    <property type="match status" value="1"/>
</dbReference>
<dbReference type="SUPFAM" id="SSF140319">
    <property type="entry name" value="IscX-like"/>
    <property type="match status" value="1"/>
</dbReference>
<reference key="1">
    <citation type="journal article" date="2002" name="Proc. Natl. Acad. Sci. U.S.A.">
        <title>Extensive mosaic structure revealed by the complete genome sequence of uropathogenic Escherichia coli.</title>
        <authorList>
            <person name="Welch R.A."/>
            <person name="Burland V."/>
            <person name="Plunkett G. III"/>
            <person name="Redford P."/>
            <person name="Roesch P."/>
            <person name="Rasko D."/>
            <person name="Buckles E.L."/>
            <person name="Liou S.-R."/>
            <person name="Boutin A."/>
            <person name="Hackett J."/>
            <person name="Stroud D."/>
            <person name="Mayhew G.F."/>
            <person name="Rose D.J."/>
            <person name="Zhou S."/>
            <person name="Schwartz D.C."/>
            <person name="Perna N.T."/>
            <person name="Mobley H.L.T."/>
            <person name="Donnenberg M.S."/>
            <person name="Blattner F.R."/>
        </authorList>
    </citation>
    <scope>NUCLEOTIDE SEQUENCE [LARGE SCALE GENOMIC DNA]</scope>
    <source>
        <strain>CFT073 / ATCC 700928 / UPEC</strain>
    </source>
</reference>
<keyword id="KW-1185">Reference proteome</keyword>
<evidence type="ECO:0000250" key="1"/>
<evidence type="ECO:0000305" key="2"/>
<organism>
    <name type="scientific">Escherichia coli O6:H1 (strain CFT073 / ATCC 700928 / UPEC)</name>
    <dbReference type="NCBI Taxonomy" id="199310"/>
    <lineage>
        <taxon>Bacteria</taxon>
        <taxon>Pseudomonadati</taxon>
        <taxon>Pseudomonadota</taxon>
        <taxon>Gammaproteobacteria</taxon>
        <taxon>Enterobacterales</taxon>
        <taxon>Enterobacteriaceae</taxon>
        <taxon>Escherichia</taxon>
    </lineage>
</organism>
<protein>
    <recommendedName>
        <fullName>Protein IscX</fullName>
    </recommendedName>
</protein>